<keyword id="KW-0963">Cytoplasm</keyword>
<keyword id="KW-0343">GTPase activation</keyword>
<keyword id="KW-1185">Reference proteome</keyword>
<gene>
    <name type="primary">gacE</name>
    <name type="ORF">DDB_G0293654</name>
</gene>
<accession>Q54BF1</accession>
<organism>
    <name type="scientific">Dictyostelium discoideum</name>
    <name type="common">Social amoeba</name>
    <dbReference type="NCBI Taxonomy" id="44689"/>
    <lineage>
        <taxon>Eukaryota</taxon>
        <taxon>Amoebozoa</taxon>
        <taxon>Evosea</taxon>
        <taxon>Eumycetozoa</taxon>
        <taxon>Dictyostelia</taxon>
        <taxon>Dictyosteliales</taxon>
        <taxon>Dictyosteliaceae</taxon>
        <taxon>Dictyostelium</taxon>
    </lineage>
</organism>
<proteinExistence type="inferred from homology"/>
<feature type="chain" id="PRO_0000380197" description="Rho GTPase-activating protein gacE">
    <location>
        <begin position="1"/>
        <end position="1132"/>
    </location>
</feature>
<feature type="domain" description="Rho-GAP" evidence="2">
    <location>
        <begin position="76"/>
        <end position="262"/>
    </location>
</feature>
<feature type="region of interest" description="Disordered" evidence="3">
    <location>
        <begin position="279"/>
        <end position="354"/>
    </location>
</feature>
<feature type="region of interest" description="Disordered" evidence="3">
    <location>
        <begin position="472"/>
        <end position="517"/>
    </location>
</feature>
<feature type="compositionally biased region" description="Low complexity" evidence="3">
    <location>
        <begin position="281"/>
        <end position="301"/>
    </location>
</feature>
<feature type="compositionally biased region" description="Polar residues" evidence="3">
    <location>
        <begin position="302"/>
        <end position="311"/>
    </location>
</feature>
<feature type="compositionally biased region" description="Low complexity" evidence="3">
    <location>
        <begin position="328"/>
        <end position="354"/>
    </location>
</feature>
<feature type="compositionally biased region" description="Low complexity" evidence="3">
    <location>
        <begin position="473"/>
        <end position="498"/>
    </location>
</feature>
<feature type="compositionally biased region" description="Low complexity" evidence="3">
    <location>
        <begin position="507"/>
        <end position="517"/>
    </location>
</feature>
<feature type="site" description="Arginine finger; crucial for GTP hydrolysis by stabilizing the transition state" evidence="2">
    <location>
        <position position="115"/>
    </location>
</feature>
<evidence type="ECO:0000250" key="1"/>
<evidence type="ECO:0000255" key="2">
    <source>
        <dbReference type="PROSITE-ProRule" id="PRU00172"/>
    </source>
</evidence>
<evidence type="ECO:0000256" key="3">
    <source>
        <dbReference type="SAM" id="MobiDB-lite"/>
    </source>
</evidence>
<protein>
    <recommendedName>
        <fullName>Rho GTPase-activating protein gacE</fullName>
    </recommendedName>
    <alternativeName>
        <fullName>GTPase activating factor for raC protein E</fullName>
    </alternativeName>
</protein>
<reference key="1">
    <citation type="journal article" date="2005" name="Nature">
        <title>The genome of the social amoeba Dictyostelium discoideum.</title>
        <authorList>
            <person name="Eichinger L."/>
            <person name="Pachebat J.A."/>
            <person name="Gloeckner G."/>
            <person name="Rajandream M.A."/>
            <person name="Sucgang R."/>
            <person name="Berriman M."/>
            <person name="Song J."/>
            <person name="Olsen R."/>
            <person name="Szafranski K."/>
            <person name="Xu Q."/>
            <person name="Tunggal B."/>
            <person name="Kummerfeld S."/>
            <person name="Madera M."/>
            <person name="Konfortov B.A."/>
            <person name="Rivero F."/>
            <person name="Bankier A.T."/>
            <person name="Lehmann R."/>
            <person name="Hamlin N."/>
            <person name="Davies R."/>
            <person name="Gaudet P."/>
            <person name="Fey P."/>
            <person name="Pilcher K."/>
            <person name="Chen G."/>
            <person name="Saunders D."/>
            <person name="Sodergren E.J."/>
            <person name="Davis P."/>
            <person name="Kerhornou A."/>
            <person name="Nie X."/>
            <person name="Hall N."/>
            <person name="Anjard C."/>
            <person name="Hemphill L."/>
            <person name="Bason N."/>
            <person name="Farbrother P."/>
            <person name="Desany B."/>
            <person name="Just E."/>
            <person name="Morio T."/>
            <person name="Rost R."/>
            <person name="Churcher C.M."/>
            <person name="Cooper J."/>
            <person name="Haydock S."/>
            <person name="van Driessche N."/>
            <person name="Cronin A."/>
            <person name="Goodhead I."/>
            <person name="Muzny D.M."/>
            <person name="Mourier T."/>
            <person name="Pain A."/>
            <person name="Lu M."/>
            <person name="Harper D."/>
            <person name="Lindsay R."/>
            <person name="Hauser H."/>
            <person name="James K.D."/>
            <person name="Quiles M."/>
            <person name="Madan Babu M."/>
            <person name="Saito T."/>
            <person name="Buchrieser C."/>
            <person name="Wardroper A."/>
            <person name="Felder M."/>
            <person name="Thangavelu M."/>
            <person name="Johnson D."/>
            <person name="Knights A."/>
            <person name="Loulseged H."/>
            <person name="Mungall K.L."/>
            <person name="Oliver K."/>
            <person name="Price C."/>
            <person name="Quail M.A."/>
            <person name="Urushihara H."/>
            <person name="Hernandez J."/>
            <person name="Rabbinowitsch E."/>
            <person name="Steffen D."/>
            <person name="Sanders M."/>
            <person name="Ma J."/>
            <person name="Kohara Y."/>
            <person name="Sharp S."/>
            <person name="Simmonds M.N."/>
            <person name="Spiegler S."/>
            <person name="Tivey A."/>
            <person name="Sugano S."/>
            <person name="White B."/>
            <person name="Walker D."/>
            <person name="Woodward J.R."/>
            <person name="Winckler T."/>
            <person name="Tanaka Y."/>
            <person name="Shaulsky G."/>
            <person name="Schleicher M."/>
            <person name="Weinstock G.M."/>
            <person name="Rosenthal A."/>
            <person name="Cox E.C."/>
            <person name="Chisholm R.L."/>
            <person name="Gibbs R.A."/>
            <person name="Loomis W.F."/>
            <person name="Platzer M."/>
            <person name="Kay R.R."/>
            <person name="Williams J.G."/>
            <person name="Dear P.H."/>
            <person name="Noegel A.A."/>
            <person name="Barrell B.G."/>
            <person name="Kuspa A."/>
        </authorList>
    </citation>
    <scope>NUCLEOTIDE SEQUENCE [LARGE SCALE GENOMIC DNA]</scope>
    <source>
        <strain>AX4</strain>
    </source>
</reference>
<sequence length="1132" mass="126778">MDHRKSVDFTNEYIKQQTENQNHTPRGHRMMANFTIRKWNSETNFNEDDYGAIPTKSSIANLLNKFLKSRPTKDDLEMNKILKSEYKPITLRYSLIEILCNHIEKYALEQEGIFRVSGSNQQIRLFWQTFTTDNIEFPINEHNVAGALKLYIREQSEPLVPYEMFSNFISQLGDGGPVTFTAITNLMSKITPENLKIIKRLIRTAVIIVRHSQLNKMDANNMGIVFGPNIFKSRPDSPNIFSEAKYSNESVSFLISNYLNVFPDLEIPILGTETNTEENELLNNNNNNNNVIMPTTTTTTTSASSSILPTDSSNNNGGGSASSPVTKSIPLSSIGSSSTSPIISPSSSSSSSPIVGTNLTTGSIHSTSPTPFSLLATTTSTTTTNSNKVNSIINSTSQSKSQLLPIHPSLLDTNQMIERVEGNPLSQMKRKDFSITHHLSTKLQKTKHFRKEEIWDCFLILKVSGNLVNVKNSTTTTTTSTSTSTSTSTSTSTSSTTTNQPNSITQSNSASNNSLINNGKIKKSTTNLISQSNSQSSLQLNQTNSNNNNIVTLTPVYILITSQNVFFFDTRIYNIQYILPHSRLKEISVDVVNKGLFSILDGESHKLSFFLVPRPRVIDLLVRSLERGRAIAKLTNKSLASLQSRKFPLLESNSGAGGTSNFGKLPESRPVFESLAQNGFTELDVWEGTVDLLEVVKKFHHILIPSADQSKCVVEFLLPAIPEFKGIYRKSYKLDSKTTVYKIICLICEKAKLEPSKFLLRTLKGRTLFDNKSLGDFGLGTLFTSWQLRLIALESPESTGNFVVEFLMPDIPEFKGMQKKAIKVDAYQPLKRIMKGLCDKLKIPNHHYYHLIGPEGEVLGDNDVLSSIGLGIKYKTCKMKLAKKVFPVGKNPELDTPMVRSLVIDNIIGLAWSKIKDRHNERIRLYCKQMLDYIVDQTFVEIAKAELVPKRVAMLGKNSRYEFYHALSLKEEEDMILMDIQGYKETVYQSRSIVPSEPDSSPNYPLYRQKLPTIRGVGPINSIRDIKVNSAKNNFLSELKDNNKQQQQQQIGNTNDEHTIKPSQRIKYIAPTPVLNNPNSIVQLLALKPGASKLVEQLKNRMTITTSKINIFDVEDLVPKNSPVLSRKSYKL</sequence>
<name>GACE_DICDI</name>
<comment type="function">
    <text evidence="1">Rho GTPase-activating protein involved in the signal transduction pathway.</text>
</comment>
<comment type="subcellular location">
    <subcellularLocation>
        <location evidence="1">Cytoplasm</location>
    </subcellularLocation>
</comment>
<dbReference type="EMBL" id="AAFI02000218">
    <property type="protein sequence ID" value="EAL60639.1"/>
    <property type="molecule type" value="Genomic_DNA"/>
</dbReference>
<dbReference type="RefSeq" id="XP_629078.1">
    <property type="nucleotide sequence ID" value="XM_629076.1"/>
</dbReference>
<dbReference type="SMR" id="Q54BF1"/>
<dbReference type="FunCoup" id="Q54BF1">
    <property type="interactions" value="188"/>
</dbReference>
<dbReference type="GlyGen" id="Q54BF1">
    <property type="glycosylation" value="1 site"/>
</dbReference>
<dbReference type="PaxDb" id="44689-DDB0233872"/>
<dbReference type="EnsemblProtists" id="EAL60639">
    <property type="protein sequence ID" value="EAL60639"/>
    <property type="gene ID" value="DDB_G0293654"/>
</dbReference>
<dbReference type="GeneID" id="8629370"/>
<dbReference type="KEGG" id="ddi:DDB_G0293654"/>
<dbReference type="dictyBase" id="DDB_G0293654">
    <property type="gene designation" value="gacE"/>
</dbReference>
<dbReference type="VEuPathDB" id="AmoebaDB:DDB_G0293654"/>
<dbReference type="eggNOG" id="KOG1450">
    <property type="taxonomic scope" value="Eukaryota"/>
</dbReference>
<dbReference type="HOGENOM" id="CLU_278914_0_0_1"/>
<dbReference type="InParanoid" id="Q54BF1"/>
<dbReference type="OMA" id="IICLICE"/>
<dbReference type="PRO" id="PR:Q54BF1"/>
<dbReference type="Proteomes" id="UP000002195">
    <property type="component" value="Chromosome 6"/>
</dbReference>
<dbReference type="GO" id="GO:0005737">
    <property type="term" value="C:cytoplasm"/>
    <property type="evidence" value="ECO:0000318"/>
    <property type="project" value="GO_Central"/>
</dbReference>
<dbReference type="GO" id="GO:0005886">
    <property type="term" value="C:plasma membrane"/>
    <property type="evidence" value="ECO:0000318"/>
    <property type="project" value="GO_Central"/>
</dbReference>
<dbReference type="GO" id="GO:0005096">
    <property type="term" value="F:GTPase activator activity"/>
    <property type="evidence" value="ECO:0000318"/>
    <property type="project" value="GO_Central"/>
</dbReference>
<dbReference type="GO" id="GO:0007264">
    <property type="term" value="P:small GTPase-mediated signal transduction"/>
    <property type="evidence" value="ECO:0000318"/>
    <property type="project" value="GO_Central"/>
</dbReference>
<dbReference type="CDD" id="cd00159">
    <property type="entry name" value="RhoGAP"/>
    <property type="match status" value="1"/>
</dbReference>
<dbReference type="Gene3D" id="1.10.555.10">
    <property type="entry name" value="Rho GTPase activation protein"/>
    <property type="match status" value="1"/>
</dbReference>
<dbReference type="InterPro" id="IPR008936">
    <property type="entry name" value="Rho_GTPase_activation_prot"/>
</dbReference>
<dbReference type="InterPro" id="IPR000198">
    <property type="entry name" value="RhoGAP_dom"/>
</dbReference>
<dbReference type="PANTHER" id="PTHR45808">
    <property type="entry name" value="RHO GTPASE-ACTIVATING PROTEIN 68F"/>
    <property type="match status" value="1"/>
</dbReference>
<dbReference type="PANTHER" id="PTHR45808:SF2">
    <property type="entry name" value="RHO GTPASE-ACTIVATING PROTEIN 68F"/>
    <property type="match status" value="1"/>
</dbReference>
<dbReference type="Pfam" id="PF00620">
    <property type="entry name" value="RhoGAP"/>
    <property type="match status" value="1"/>
</dbReference>
<dbReference type="SMART" id="SM00324">
    <property type="entry name" value="RhoGAP"/>
    <property type="match status" value="1"/>
</dbReference>
<dbReference type="SUPFAM" id="SSF48350">
    <property type="entry name" value="GTPase activation domain, GAP"/>
    <property type="match status" value="1"/>
</dbReference>
<dbReference type="PROSITE" id="PS50238">
    <property type="entry name" value="RHOGAP"/>
    <property type="match status" value="1"/>
</dbReference>